<proteinExistence type="predicted"/>
<reference key="1">
    <citation type="journal article" date="2000" name="Nature">
        <title>Sequence and analysis of chromosome 3 of the plant Arabidopsis thaliana.</title>
        <authorList>
            <person name="Salanoubat M."/>
            <person name="Lemcke K."/>
            <person name="Rieger M."/>
            <person name="Ansorge W."/>
            <person name="Unseld M."/>
            <person name="Fartmann B."/>
            <person name="Valle G."/>
            <person name="Bloecker H."/>
            <person name="Perez-Alonso M."/>
            <person name="Obermaier B."/>
            <person name="Delseny M."/>
            <person name="Boutry M."/>
            <person name="Grivell L.A."/>
            <person name="Mache R."/>
            <person name="Puigdomenech P."/>
            <person name="De Simone V."/>
            <person name="Choisne N."/>
            <person name="Artiguenave F."/>
            <person name="Robert C."/>
            <person name="Brottier P."/>
            <person name="Wincker P."/>
            <person name="Cattolico L."/>
            <person name="Weissenbach J."/>
            <person name="Saurin W."/>
            <person name="Quetier F."/>
            <person name="Schaefer M."/>
            <person name="Mueller-Auer S."/>
            <person name="Gabel C."/>
            <person name="Fuchs M."/>
            <person name="Benes V."/>
            <person name="Wurmbach E."/>
            <person name="Drzonek H."/>
            <person name="Erfle H."/>
            <person name="Jordan N."/>
            <person name="Bangert S."/>
            <person name="Wiedelmann R."/>
            <person name="Kranz H."/>
            <person name="Voss H."/>
            <person name="Holland R."/>
            <person name="Brandt P."/>
            <person name="Nyakatura G."/>
            <person name="Vezzi A."/>
            <person name="D'Angelo M."/>
            <person name="Pallavicini A."/>
            <person name="Toppo S."/>
            <person name="Simionati B."/>
            <person name="Conrad A."/>
            <person name="Hornischer K."/>
            <person name="Kauer G."/>
            <person name="Loehnert T.-H."/>
            <person name="Nordsiek G."/>
            <person name="Reichelt J."/>
            <person name="Scharfe M."/>
            <person name="Schoen O."/>
            <person name="Bargues M."/>
            <person name="Terol J."/>
            <person name="Climent J."/>
            <person name="Navarro P."/>
            <person name="Collado C."/>
            <person name="Perez-Perez A."/>
            <person name="Ottenwaelder B."/>
            <person name="Duchemin D."/>
            <person name="Cooke R."/>
            <person name="Laudie M."/>
            <person name="Berger-Llauro C."/>
            <person name="Purnelle B."/>
            <person name="Masuy D."/>
            <person name="de Haan M."/>
            <person name="Maarse A.C."/>
            <person name="Alcaraz J.-P."/>
            <person name="Cottet A."/>
            <person name="Casacuberta E."/>
            <person name="Monfort A."/>
            <person name="Argiriou A."/>
            <person name="Flores M."/>
            <person name="Liguori R."/>
            <person name="Vitale D."/>
            <person name="Mannhaupt G."/>
            <person name="Haase D."/>
            <person name="Schoof H."/>
            <person name="Rudd S."/>
            <person name="Zaccaria P."/>
            <person name="Mewes H.-W."/>
            <person name="Mayer K.F.X."/>
            <person name="Kaul S."/>
            <person name="Town C.D."/>
            <person name="Koo H.L."/>
            <person name="Tallon L.J."/>
            <person name="Jenkins J."/>
            <person name="Rooney T."/>
            <person name="Rizzo M."/>
            <person name="Walts A."/>
            <person name="Utterback T."/>
            <person name="Fujii C.Y."/>
            <person name="Shea T.P."/>
            <person name="Creasy T.H."/>
            <person name="Haas B."/>
            <person name="Maiti R."/>
            <person name="Wu D."/>
            <person name="Peterson J."/>
            <person name="Van Aken S."/>
            <person name="Pai G."/>
            <person name="Militscher J."/>
            <person name="Sellers P."/>
            <person name="Gill J.E."/>
            <person name="Feldblyum T.V."/>
            <person name="Preuss D."/>
            <person name="Lin X."/>
            <person name="Nierman W.C."/>
            <person name="Salzberg S.L."/>
            <person name="White O."/>
            <person name="Venter J.C."/>
            <person name="Fraser C.M."/>
            <person name="Kaneko T."/>
            <person name="Nakamura Y."/>
            <person name="Sato S."/>
            <person name="Kato T."/>
            <person name="Asamizu E."/>
            <person name="Sasamoto S."/>
            <person name="Kimura T."/>
            <person name="Idesawa K."/>
            <person name="Kawashima K."/>
            <person name="Kishida Y."/>
            <person name="Kiyokawa C."/>
            <person name="Kohara M."/>
            <person name="Matsumoto M."/>
            <person name="Matsuno A."/>
            <person name="Muraki A."/>
            <person name="Nakayama S."/>
            <person name="Nakazaki N."/>
            <person name="Shinpo S."/>
            <person name="Takeuchi C."/>
            <person name="Wada T."/>
            <person name="Watanabe A."/>
            <person name="Yamada M."/>
            <person name="Yasuda M."/>
            <person name="Tabata S."/>
        </authorList>
    </citation>
    <scope>NUCLEOTIDE SEQUENCE [LARGE SCALE GENOMIC DNA]</scope>
    <source>
        <strain>cv. Columbia</strain>
    </source>
</reference>
<reference key="2">
    <citation type="journal article" date="2017" name="Plant J.">
        <title>Araport11: a complete reannotation of the Arabidopsis thaliana reference genome.</title>
        <authorList>
            <person name="Cheng C.Y."/>
            <person name="Krishnakumar V."/>
            <person name="Chan A.P."/>
            <person name="Thibaud-Nissen F."/>
            <person name="Schobel S."/>
            <person name="Town C.D."/>
        </authorList>
    </citation>
    <scope>GENOME REANNOTATION</scope>
    <source>
        <strain>cv. Columbia</strain>
    </source>
</reference>
<sequence>MTELVEHRVCEDRISSLPDDLLVKILLCVPTKDAAATTFLSKRWRFVWRMLPRLNYIETTSDVKSNTVWWFLEESFRFHKAPLLERLWIDLGPQCPINVNPVKWVAKARAPPASNVGPPLLDTRVRWLTFRLLWKGEPIRMPKSFYFCKTLERLTLSDKILVDVPCQVSLPSLRELDLFCVVYKDEDSHVKLLSSCPVLKHLKVTRNRRVEDNVRTFRVEVPSLLRLDYKAGMMFREDSDMSDPFLVTDTPNLLSLHIFDTVGYSLSVWYMPHLVTVVTDELFPSEKFMRPLSSVKYLALSPFDTMVPWCDAVNNYSRLVECMIHLSEYDLLESLLVLLSKCSKLKVFLVDSDIPRWNHDPALWNQPSSIPRCLSSHLEIFEWDGYVGREDEKKIIRYILENSKYLKTAGISPNSTFSGEEKQKMEELESMHRTPTSVLLSSARMSFRY</sequence>
<evidence type="ECO:0000305" key="1"/>
<name>FDL45_ARATH</name>
<dbReference type="EMBL" id="AC012329">
    <property type="protein sequence ID" value="AAG52175.1"/>
    <property type="molecule type" value="Genomic_DNA"/>
</dbReference>
<dbReference type="EMBL" id="AL132964">
    <property type="protein sequence ID" value="CAB62453.1"/>
    <property type="status" value="ALT_SEQ"/>
    <property type="molecule type" value="Genomic_DNA"/>
</dbReference>
<dbReference type="EMBL" id="CP002686">
    <property type="protein sequence ID" value="AEE78548.1"/>
    <property type="status" value="ALT_SEQ"/>
    <property type="molecule type" value="Genomic_DNA"/>
</dbReference>
<dbReference type="EMBL" id="CP002686">
    <property type="protein sequence ID" value="ANM65419.1"/>
    <property type="molecule type" value="Genomic_DNA"/>
</dbReference>
<dbReference type="PIR" id="T46226">
    <property type="entry name" value="T46226"/>
</dbReference>
<dbReference type="RefSeq" id="NP_001327389.1">
    <property type="nucleotide sequence ID" value="NM_001339422.1"/>
</dbReference>
<dbReference type="RefSeq" id="NP_190517.1">
    <property type="nucleotide sequence ID" value="NM_114808.1"/>
</dbReference>
<dbReference type="SMR" id="Q9CA04"/>
<dbReference type="STRING" id="3702.Q9CA04"/>
<dbReference type="PaxDb" id="3702-AT3G49480.1"/>
<dbReference type="EnsemblPlants" id="AT3G49480.2">
    <property type="protein sequence ID" value="AT3G49480.2"/>
    <property type="gene ID" value="AT3G49480"/>
</dbReference>
<dbReference type="GeneID" id="824110"/>
<dbReference type="Gramene" id="AT3G49480.2">
    <property type="protein sequence ID" value="AT3G49480.2"/>
    <property type="gene ID" value="AT3G49480"/>
</dbReference>
<dbReference type="KEGG" id="ath:AT3G49480"/>
<dbReference type="Araport" id="AT3G49480"/>
<dbReference type="TAIR" id="AT3G49480"/>
<dbReference type="HOGENOM" id="CLU_010721_1_2_1"/>
<dbReference type="InParanoid" id="Q9CA04"/>
<dbReference type="OMA" id="WFLEESF"/>
<dbReference type="PRO" id="PR:Q9CA04"/>
<dbReference type="Proteomes" id="UP000006548">
    <property type="component" value="Chromosome 3"/>
</dbReference>
<dbReference type="ExpressionAtlas" id="Q9CA04">
    <property type="expression patterns" value="baseline and differential"/>
</dbReference>
<dbReference type="CDD" id="cd22160">
    <property type="entry name" value="F-box_AtFBL13-like"/>
    <property type="match status" value="1"/>
</dbReference>
<dbReference type="Gene3D" id="1.20.1280.50">
    <property type="match status" value="1"/>
</dbReference>
<dbReference type="Gene3D" id="3.80.10.10">
    <property type="entry name" value="Ribonuclease Inhibitor"/>
    <property type="match status" value="1"/>
</dbReference>
<dbReference type="InterPro" id="IPR036047">
    <property type="entry name" value="F-box-like_dom_sf"/>
</dbReference>
<dbReference type="InterPro" id="IPR053781">
    <property type="entry name" value="F-box_AtFBL13-like"/>
</dbReference>
<dbReference type="InterPro" id="IPR001810">
    <property type="entry name" value="F-box_dom"/>
</dbReference>
<dbReference type="InterPro" id="IPR006566">
    <property type="entry name" value="FBD"/>
</dbReference>
<dbReference type="InterPro" id="IPR050232">
    <property type="entry name" value="FBL13/AtMIF1-like"/>
</dbReference>
<dbReference type="InterPro" id="IPR032675">
    <property type="entry name" value="LRR_dom_sf"/>
</dbReference>
<dbReference type="InterPro" id="IPR055411">
    <property type="entry name" value="LRR_FXL15/At3g58940/PEG3-like"/>
</dbReference>
<dbReference type="PANTHER" id="PTHR31900:SF34">
    <property type="entry name" value="EMB|CAB62440.1-RELATED"/>
    <property type="match status" value="1"/>
</dbReference>
<dbReference type="PANTHER" id="PTHR31900">
    <property type="entry name" value="F-BOX/RNI SUPERFAMILY PROTEIN-RELATED"/>
    <property type="match status" value="1"/>
</dbReference>
<dbReference type="Pfam" id="PF00646">
    <property type="entry name" value="F-box"/>
    <property type="match status" value="1"/>
</dbReference>
<dbReference type="Pfam" id="PF08387">
    <property type="entry name" value="FBD"/>
    <property type="match status" value="1"/>
</dbReference>
<dbReference type="Pfam" id="PF24758">
    <property type="entry name" value="LRR_At5g56370"/>
    <property type="match status" value="1"/>
</dbReference>
<dbReference type="SMART" id="SM00579">
    <property type="entry name" value="FBD"/>
    <property type="match status" value="1"/>
</dbReference>
<dbReference type="SMART" id="SM00256">
    <property type="entry name" value="FBOX"/>
    <property type="match status" value="1"/>
</dbReference>
<dbReference type="SUPFAM" id="SSF81383">
    <property type="entry name" value="F-box domain"/>
    <property type="match status" value="1"/>
</dbReference>
<dbReference type="SUPFAM" id="SSF52047">
    <property type="entry name" value="RNI-like"/>
    <property type="match status" value="1"/>
</dbReference>
<comment type="sequence caution" evidence="1">
    <conflict type="erroneous gene model prediction">
        <sequence resource="EMBL-CDS" id="AEE78548"/>
    </conflict>
</comment>
<comment type="sequence caution" evidence="1">
    <conflict type="erroneous gene model prediction">
        <sequence resource="EMBL-CDS" id="CAB62453"/>
    </conflict>
</comment>
<feature type="chain" id="PRO_0000281956" description="Putative F-box/FBD/LRR-repeat protein At3g49480">
    <location>
        <begin position="1"/>
        <end position="449"/>
    </location>
</feature>
<feature type="domain" description="F-box">
    <location>
        <begin position="11"/>
        <end position="59"/>
    </location>
</feature>
<feature type="repeat" description="LRR 1">
    <location>
        <begin position="60"/>
        <end position="91"/>
    </location>
</feature>
<feature type="repeat" description="LRR 2">
    <location>
        <begin position="153"/>
        <end position="180"/>
    </location>
</feature>
<feature type="repeat" description="LRR 3">
    <location>
        <begin position="182"/>
        <end position="206"/>
    </location>
</feature>
<feature type="repeat" description="LRR 4">
    <location>
        <begin position="235"/>
        <end position="260"/>
    </location>
</feature>
<feature type="repeat" description="LRR 5">
    <location>
        <begin position="275"/>
        <end position="302"/>
    </location>
</feature>
<feature type="repeat" description="LRR 6">
    <location>
        <begin position="327"/>
        <end position="352"/>
    </location>
</feature>
<feature type="domain" description="FBD">
    <location>
        <begin position="364"/>
        <end position="412"/>
    </location>
</feature>
<accession>Q9CA04</accession>
<accession>F4IXY3</accession>
<accession>Q9SCL0</accession>
<organism>
    <name type="scientific">Arabidopsis thaliana</name>
    <name type="common">Mouse-ear cress</name>
    <dbReference type="NCBI Taxonomy" id="3702"/>
    <lineage>
        <taxon>Eukaryota</taxon>
        <taxon>Viridiplantae</taxon>
        <taxon>Streptophyta</taxon>
        <taxon>Embryophyta</taxon>
        <taxon>Tracheophyta</taxon>
        <taxon>Spermatophyta</taxon>
        <taxon>Magnoliopsida</taxon>
        <taxon>eudicotyledons</taxon>
        <taxon>Gunneridae</taxon>
        <taxon>Pentapetalae</taxon>
        <taxon>rosids</taxon>
        <taxon>malvids</taxon>
        <taxon>Brassicales</taxon>
        <taxon>Brassicaceae</taxon>
        <taxon>Camelineae</taxon>
        <taxon>Arabidopsis</taxon>
    </lineage>
</organism>
<gene>
    <name type="ordered locus">At3g49480</name>
    <name type="ORF">T1G12.18</name>
    <name type="ORF">T9C5.80</name>
</gene>
<protein>
    <recommendedName>
        <fullName>Putative F-box/FBD/LRR-repeat protein At3g49480</fullName>
    </recommendedName>
</protein>
<keyword id="KW-0433">Leucine-rich repeat</keyword>
<keyword id="KW-1185">Reference proteome</keyword>
<keyword id="KW-0677">Repeat</keyword>